<gene>
    <name type="primary">PGPEP1</name>
    <name type="synonym">PGPI</name>
</gene>
<proteinExistence type="evidence at protein level"/>
<feature type="chain" id="PRO_0000184761" description="Pyroglutamyl-peptidase 1">
    <location>
        <begin position="1"/>
        <end position="209"/>
    </location>
</feature>
<feature type="active site" evidence="1">
    <location>
        <position position="85"/>
    </location>
</feature>
<feature type="active site" evidence="1">
    <location>
        <position position="149"/>
    </location>
</feature>
<feature type="active site" evidence="1">
    <location>
        <position position="168"/>
    </location>
</feature>
<feature type="splice variant" id="VSP_056472" description="In isoform 2." evidence="5 6">
    <location>
        <begin position="1"/>
        <end position="77"/>
    </location>
</feature>
<evidence type="ECO:0000250" key="1"/>
<evidence type="ECO:0000255" key="2">
    <source>
        <dbReference type="PROSITE-ProRule" id="PRU10076"/>
    </source>
</evidence>
<evidence type="ECO:0000255" key="3">
    <source>
        <dbReference type="PROSITE-ProRule" id="PRU10077"/>
    </source>
</evidence>
<evidence type="ECO:0000269" key="4">
    <source>
    </source>
</evidence>
<evidence type="ECO:0000303" key="5">
    <source>
    </source>
</evidence>
<evidence type="ECO:0000303" key="6">
    <source>
    </source>
</evidence>
<evidence type="ECO:0000305" key="7"/>
<protein>
    <recommendedName>
        <fullName>Pyroglutamyl-peptidase 1</fullName>
        <ecNumber>3.4.19.3</ecNumber>
    </recommendedName>
    <alternativeName>
        <fullName>5-oxoprolyl-peptidase</fullName>
    </alternativeName>
    <alternativeName>
        <fullName>Pyroglutamyl aminopeptidase I</fullName>
        <shortName>PAP-I</shortName>
    </alternativeName>
    <alternativeName>
        <fullName>Pyroglutamyl-peptidase I</fullName>
        <shortName>PGP-I</shortName>
    </alternativeName>
    <alternativeName>
        <fullName>Pyrrolidone-carboxylate peptidase</fullName>
    </alternativeName>
</protein>
<organism>
    <name type="scientific">Homo sapiens</name>
    <name type="common">Human</name>
    <dbReference type="NCBI Taxonomy" id="9606"/>
    <lineage>
        <taxon>Eukaryota</taxon>
        <taxon>Metazoa</taxon>
        <taxon>Chordata</taxon>
        <taxon>Craniata</taxon>
        <taxon>Vertebrata</taxon>
        <taxon>Euteleostomi</taxon>
        <taxon>Mammalia</taxon>
        <taxon>Eutheria</taxon>
        <taxon>Euarchontoglires</taxon>
        <taxon>Primates</taxon>
        <taxon>Haplorrhini</taxon>
        <taxon>Catarrhini</taxon>
        <taxon>Hominidae</taxon>
        <taxon>Homo</taxon>
    </lineage>
</organism>
<accession>Q9NXJ5</accession>
<accession>A8K1Q3</accession>
<accession>Q8IVT1</accession>
<sequence length="209" mass="23138">MEQPRKAVVVTGFGPFGEHTVNASWIAVQELEKLGLGDSVDLHVYEIPVEYQTVQRLIPALWEKHSPQLVVHVGVSGMATTVTLEKCGHNKGYKGLDNCRFCPGSQCCVEDGPESIDSIIDMDAVCKRVTTLGLDVSVTISQDAGRYLCDFTYYTSLYQSHGRSAFVHVPPLGKPYNADQLGRALRAIIEEMLDLLEQSEGKINYCHKH</sequence>
<keyword id="KW-0025">Alternative splicing</keyword>
<keyword id="KW-0963">Cytoplasm</keyword>
<keyword id="KW-0378">Hydrolase</keyword>
<keyword id="KW-0645">Protease</keyword>
<keyword id="KW-1267">Proteomics identification</keyword>
<keyword id="KW-1185">Reference proteome</keyword>
<keyword id="KW-0788">Thiol protease</keyword>
<reference key="1">
    <citation type="journal article" date="2003" name="Protein Expr. Purif.">
        <title>Pyroglutamyl-peptidase I: cloning, sequencing, and characterisation of the recombinant human enzyme.</title>
        <authorList>
            <person name="Dando P.M."/>
            <person name="Fortunato M."/>
            <person name="Strand G.B."/>
            <person name="Smith T.S."/>
            <person name="Barrett A.J."/>
        </authorList>
    </citation>
    <scope>NUCLEOTIDE SEQUENCE [MRNA] (ISOFORM 1)</scope>
    <scope>FUNCTION</scope>
    <scope>CATALYTIC ACTIVITY</scope>
    <scope>SUBUNIT</scope>
    <scope>ACTIVITY REGULATION</scope>
</reference>
<reference key="2">
    <citation type="journal article" date="2004" name="Nat. Genet.">
        <title>Complete sequencing and characterization of 21,243 full-length human cDNAs.</title>
        <authorList>
            <person name="Ota T."/>
            <person name="Suzuki Y."/>
            <person name="Nishikawa T."/>
            <person name="Otsuki T."/>
            <person name="Sugiyama T."/>
            <person name="Irie R."/>
            <person name="Wakamatsu A."/>
            <person name="Hayashi K."/>
            <person name="Sato H."/>
            <person name="Nagai K."/>
            <person name="Kimura K."/>
            <person name="Makita H."/>
            <person name="Sekine M."/>
            <person name="Obayashi M."/>
            <person name="Nishi T."/>
            <person name="Shibahara T."/>
            <person name="Tanaka T."/>
            <person name="Ishii S."/>
            <person name="Yamamoto J."/>
            <person name="Saito K."/>
            <person name="Kawai Y."/>
            <person name="Isono Y."/>
            <person name="Nakamura Y."/>
            <person name="Nagahari K."/>
            <person name="Murakami K."/>
            <person name="Yasuda T."/>
            <person name="Iwayanagi T."/>
            <person name="Wagatsuma M."/>
            <person name="Shiratori A."/>
            <person name="Sudo H."/>
            <person name="Hosoiri T."/>
            <person name="Kaku Y."/>
            <person name="Kodaira H."/>
            <person name="Kondo H."/>
            <person name="Sugawara M."/>
            <person name="Takahashi M."/>
            <person name="Kanda K."/>
            <person name="Yokoi T."/>
            <person name="Furuya T."/>
            <person name="Kikkawa E."/>
            <person name="Omura Y."/>
            <person name="Abe K."/>
            <person name="Kamihara K."/>
            <person name="Katsuta N."/>
            <person name="Sato K."/>
            <person name="Tanikawa M."/>
            <person name="Yamazaki M."/>
            <person name="Ninomiya K."/>
            <person name="Ishibashi T."/>
            <person name="Yamashita H."/>
            <person name="Murakawa K."/>
            <person name="Fujimori K."/>
            <person name="Tanai H."/>
            <person name="Kimata M."/>
            <person name="Watanabe M."/>
            <person name="Hiraoka S."/>
            <person name="Chiba Y."/>
            <person name="Ishida S."/>
            <person name="Ono Y."/>
            <person name="Takiguchi S."/>
            <person name="Watanabe S."/>
            <person name="Yosida M."/>
            <person name="Hotuta T."/>
            <person name="Kusano J."/>
            <person name="Kanehori K."/>
            <person name="Takahashi-Fujii A."/>
            <person name="Hara H."/>
            <person name="Tanase T.-O."/>
            <person name="Nomura Y."/>
            <person name="Togiya S."/>
            <person name="Komai F."/>
            <person name="Hara R."/>
            <person name="Takeuchi K."/>
            <person name="Arita M."/>
            <person name="Imose N."/>
            <person name="Musashino K."/>
            <person name="Yuuki H."/>
            <person name="Oshima A."/>
            <person name="Sasaki N."/>
            <person name="Aotsuka S."/>
            <person name="Yoshikawa Y."/>
            <person name="Matsunawa H."/>
            <person name="Ichihara T."/>
            <person name="Shiohata N."/>
            <person name="Sano S."/>
            <person name="Moriya S."/>
            <person name="Momiyama H."/>
            <person name="Satoh N."/>
            <person name="Takami S."/>
            <person name="Terashima Y."/>
            <person name="Suzuki O."/>
            <person name="Nakagawa S."/>
            <person name="Senoh A."/>
            <person name="Mizoguchi H."/>
            <person name="Goto Y."/>
            <person name="Shimizu F."/>
            <person name="Wakebe H."/>
            <person name="Hishigaki H."/>
            <person name="Watanabe T."/>
            <person name="Sugiyama A."/>
            <person name="Takemoto M."/>
            <person name="Kawakami B."/>
            <person name="Yamazaki M."/>
            <person name="Watanabe K."/>
            <person name="Kumagai A."/>
            <person name="Itakura S."/>
            <person name="Fukuzumi Y."/>
            <person name="Fujimori Y."/>
            <person name="Komiyama M."/>
            <person name="Tashiro H."/>
            <person name="Tanigami A."/>
            <person name="Fujiwara T."/>
            <person name="Ono T."/>
            <person name="Yamada K."/>
            <person name="Fujii Y."/>
            <person name="Ozaki K."/>
            <person name="Hirao M."/>
            <person name="Ohmori Y."/>
            <person name="Kawabata A."/>
            <person name="Hikiji T."/>
            <person name="Kobatake N."/>
            <person name="Inagaki H."/>
            <person name="Ikema Y."/>
            <person name="Okamoto S."/>
            <person name="Okitani R."/>
            <person name="Kawakami T."/>
            <person name="Noguchi S."/>
            <person name="Itoh T."/>
            <person name="Shigeta K."/>
            <person name="Senba T."/>
            <person name="Matsumura K."/>
            <person name="Nakajima Y."/>
            <person name="Mizuno T."/>
            <person name="Morinaga M."/>
            <person name="Sasaki M."/>
            <person name="Togashi T."/>
            <person name="Oyama M."/>
            <person name="Hata H."/>
            <person name="Watanabe M."/>
            <person name="Komatsu T."/>
            <person name="Mizushima-Sugano J."/>
            <person name="Satoh T."/>
            <person name="Shirai Y."/>
            <person name="Takahashi Y."/>
            <person name="Nakagawa K."/>
            <person name="Okumura K."/>
            <person name="Nagase T."/>
            <person name="Nomura N."/>
            <person name="Kikuchi H."/>
            <person name="Masuho Y."/>
            <person name="Yamashita R."/>
            <person name="Nakai K."/>
            <person name="Yada T."/>
            <person name="Nakamura Y."/>
            <person name="Ohara O."/>
            <person name="Isogai T."/>
            <person name="Sugano S."/>
        </authorList>
    </citation>
    <scope>NUCLEOTIDE SEQUENCE [LARGE SCALE MRNA] (ISOFORMS 1 AND 2)</scope>
    <source>
        <tissue>Amygdala</tissue>
        <tissue>Colon mucosa</tissue>
        <tissue>Hippocampus</tissue>
    </source>
</reference>
<reference key="3">
    <citation type="journal article" date="2004" name="Nature">
        <title>The DNA sequence and biology of human chromosome 19.</title>
        <authorList>
            <person name="Grimwood J."/>
            <person name="Gordon L.A."/>
            <person name="Olsen A.S."/>
            <person name="Terry A."/>
            <person name="Schmutz J."/>
            <person name="Lamerdin J.E."/>
            <person name="Hellsten U."/>
            <person name="Goodstein D."/>
            <person name="Couronne O."/>
            <person name="Tran-Gyamfi M."/>
            <person name="Aerts A."/>
            <person name="Altherr M."/>
            <person name="Ashworth L."/>
            <person name="Bajorek E."/>
            <person name="Black S."/>
            <person name="Branscomb E."/>
            <person name="Caenepeel S."/>
            <person name="Carrano A.V."/>
            <person name="Caoile C."/>
            <person name="Chan Y.M."/>
            <person name="Christensen M."/>
            <person name="Cleland C.A."/>
            <person name="Copeland A."/>
            <person name="Dalin E."/>
            <person name="Dehal P."/>
            <person name="Denys M."/>
            <person name="Detter J.C."/>
            <person name="Escobar J."/>
            <person name="Flowers D."/>
            <person name="Fotopulos D."/>
            <person name="Garcia C."/>
            <person name="Georgescu A.M."/>
            <person name="Glavina T."/>
            <person name="Gomez M."/>
            <person name="Gonzales E."/>
            <person name="Groza M."/>
            <person name="Hammon N."/>
            <person name="Hawkins T."/>
            <person name="Haydu L."/>
            <person name="Ho I."/>
            <person name="Huang W."/>
            <person name="Israni S."/>
            <person name="Jett J."/>
            <person name="Kadner K."/>
            <person name="Kimball H."/>
            <person name="Kobayashi A."/>
            <person name="Larionov V."/>
            <person name="Leem S.-H."/>
            <person name="Lopez F."/>
            <person name="Lou Y."/>
            <person name="Lowry S."/>
            <person name="Malfatti S."/>
            <person name="Martinez D."/>
            <person name="McCready P.M."/>
            <person name="Medina C."/>
            <person name="Morgan J."/>
            <person name="Nelson K."/>
            <person name="Nolan M."/>
            <person name="Ovcharenko I."/>
            <person name="Pitluck S."/>
            <person name="Pollard M."/>
            <person name="Popkie A.P."/>
            <person name="Predki P."/>
            <person name="Quan G."/>
            <person name="Ramirez L."/>
            <person name="Rash S."/>
            <person name="Retterer J."/>
            <person name="Rodriguez A."/>
            <person name="Rogers S."/>
            <person name="Salamov A."/>
            <person name="Salazar A."/>
            <person name="She X."/>
            <person name="Smith D."/>
            <person name="Slezak T."/>
            <person name="Solovyev V."/>
            <person name="Thayer N."/>
            <person name="Tice H."/>
            <person name="Tsai M."/>
            <person name="Ustaszewska A."/>
            <person name="Vo N."/>
            <person name="Wagner M."/>
            <person name="Wheeler J."/>
            <person name="Wu K."/>
            <person name="Xie G."/>
            <person name="Yang J."/>
            <person name="Dubchak I."/>
            <person name="Furey T.S."/>
            <person name="DeJong P."/>
            <person name="Dickson M."/>
            <person name="Gordon D."/>
            <person name="Eichler E.E."/>
            <person name="Pennacchio L.A."/>
            <person name="Richardson P."/>
            <person name="Stubbs L."/>
            <person name="Rokhsar D.S."/>
            <person name="Myers R.M."/>
            <person name="Rubin E.M."/>
            <person name="Lucas S.M."/>
        </authorList>
    </citation>
    <scope>NUCLEOTIDE SEQUENCE [LARGE SCALE GENOMIC DNA]</scope>
</reference>
<reference key="4">
    <citation type="submission" date="2005-07" db="EMBL/GenBank/DDBJ databases">
        <authorList>
            <person name="Mural R.J."/>
            <person name="Istrail S."/>
            <person name="Sutton G.G."/>
            <person name="Florea L."/>
            <person name="Halpern A.L."/>
            <person name="Mobarry C.M."/>
            <person name="Lippert R."/>
            <person name="Walenz B."/>
            <person name="Shatkay H."/>
            <person name="Dew I."/>
            <person name="Miller J.R."/>
            <person name="Flanigan M.J."/>
            <person name="Edwards N.J."/>
            <person name="Bolanos R."/>
            <person name="Fasulo D."/>
            <person name="Halldorsson B.V."/>
            <person name="Hannenhalli S."/>
            <person name="Turner R."/>
            <person name="Yooseph S."/>
            <person name="Lu F."/>
            <person name="Nusskern D.R."/>
            <person name="Shue B.C."/>
            <person name="Zheng X.H."/>
            <person name="Zhong F."/>
            <person name="Delcher A.L."/>
            <person name="Huson D.H."/>
            <person name="Kravitz S.A."/>
            <person name="Mouchard L."/>
            <person name="Reinert K."/>
            <person name="Remington K.A."/>
            <person name="Clark A.G."/>
            <person name="Waterman M.S."/>
            <person name="Eichler E.E."/>
            <person name="Adams M.D."/>
            <person name="Hunkapiller M.W."/>
            <person name="Myers E.W."/>
            <person name="Venter J.C."/>
        </authorList>
    </citation>
    <scope>NUCLEOTIDE SEQUENCE [LARGE SCALE GENOMIC DNA]</scope>
</reference>
<reference key="5">
    <citation type="journal article" date="2004" name="Genome Res.">
        <title>The status, quality, and expansion of the NIH full-length cDNA project: the Mammalian Gene Collection (MGC).</title>
        <authorList>
            <consortium name="The MGC Project Team"/>
        </authorList>
    </citation>
    <scope>NUCLEOTIDE SEQUENCE [LARGE SCALE MRNA] (ISOFORM 2)</scope>
    <source>
        <tissue>Blood</tissue>
    </source>
</reference>
<name>PGPI_HUMAN</name>
<dbReference type="EC" id="3.4.19.3"/>
<dbReference type="EMBL" id="AJ278828">
    <property type="protein sequence ID" value="CAC03610.1"/>
    <property type="molecule type" value="mRNA"/>
</dbReference>
<dbReference type="EMBL" id="AK000215">
    <property type="protein sequence ID" value="BAA91015.1"/>
    <property type="molecule type" value="mRNA"/>
</dbReference>
<dbReference type="EMBL" id="AK289968">
    <property type="protein sequence ID" value="BAF82657.1"/>
    <property type="molecule type" value="mRNA"/>
</dbReference>
<dbReference type="EMBL" id="AK294497">
    <property type="protein sequence ID" value="BAG57716.1"/>
    <property type="molecule type" value="mRNA"/>
</dbReference>
<dbReference type="EMBL" id="AC008397">
    <property type="status" value="NOT_ANNOTATED_CDS"/>
    <property type="molecule type" value="Genomic_DNA"/>
</dbReference>
<dbReference type="EMBL" id="CH471106">
    <property type="protein sequence ID" value="EAW84691.1"/>
    <property type="molecule type" value="Genomic_DNA"/>
</dbReference>
<dbReference type="EMBL" id="CH471106">
    <property type="protein sequence ID" value="EAW84692.1"/>
    <property type="molecule type" value="Genomic_DNA"/>
</dbReference>
<dbReference type="EMBL" id="BC042138">
    <property type="protein sequence ID" value="AAH42138.1"/>
    <property type="molecule type" value="mRNA"/>
</dbReference>
<dbReference type="CCDS" id="CCDS12375.1">
    <molecule id="Q9NXJ5-1"/>
</dbReference>
<dbReference type="CCDS" id="CCDS82319.1">
    <molecule id="Q9NXJ5-2"/>
</dbReference>
<dbReference type="RefSeq" id="NP_001287856.1">
    <property type="nucleotide sequence ID" value="NM_001300927.1"/>
</dbReference>
<dbReference type="RefSeq" id="NP_001295295.1">
    <property type="nucleotide sequence ID" value="NM_001308366.1"/>
</dbReference>
<dbReference type="RefSeq" id="NP_001316400.1">
    <property type="nucleotide sequence ID" value="NM_001329471.1"/>
</dbReference>
<dbReference type="RefSeq" id="NP_001316405.1">
    <property type="nucleotide sequence ID" value="NM_001329476.1"/>
</dbReference>
<dbReference type="RefSeq" id="NP_001316406.1">
    <molecule id="Q9NXJ5-2"/>
    <property type="nucleotide sequence ID" value="NM_001329477.2"/>
</dbReference>
<dbReference type="RefSeq" id="NP_001316407.1">
    <molecule id="Q9NXJ5-2"/>
    <property type="nucleotide sequence ID" value="NM_001329478.2"/>
</dbReference>
<dbReference type="RefSeq" id="NP_060182.1">
    <molecule id="Q9NXJ5-1"/>
    <property type="nucleotide sequence ID" value="NM_017712.4"/>
</dbReference>
<dbReference type="SMR" id="Q9NXJ5"/>
<dbReference type="BioGRID" id="120208">
    <property type="interactions" value="22"/>
</dbReference>
<dbReference type="FunCoup" id="Q9NXJ5">
    <property type="interactions" value="506"/>
</dbReference>
<dbReference type="IntAct" id="Q9NXJ5">
    <property type="interactions" value="14"/>
</dbReference>
<dbReference type="STRING" id="9606.ENSP00000269919"/>
<dbReference type="MEROPS" id="C15.010"/>
<dbReference type="iPTMnet" id="Q9NXJ5"/>
<dbReference type="PhosphoSitePlus" id="Q9NXJ5"/>
<dbReference type="BioMuta" id="PGPEP1"/>
<dbReference type="DMDM" id="14548183"/>
<dbReference type="jPOST" id="Q9NXJ5"/>
<dbReference type="MassIVE" id="Q9NXJ5"/>
<dbReference type="PaxDb" id="9606-ENSP00000269919"/>
<dbReference type="PeptideAtlas" id="Q9NXJ5"/>
<dbReference type="ProteomicsDB" id="83105">
    <molecule id="Q9NXJ5-1"/>
</dbReference>
<dbReference type="Pumba" id="Q9NXJ5"/>
<dbReference type="Antibodypedia" id="28025">
    <property type="antibodies" value="108 antibodies from 21 providers"/>
</dbReference>
<dbReference type="DNASU" id="54858"/>
<dbReference type="Ensembl" id="ENST00000252813.5">
    <molecule id="Q9NXJ5-2"/>
    <property type="protein sequence ID" value="ENSP00000252813.5"/>
    <property type="gene ID" value="ENSG00000130517.14"/>
</dbReference>
<dbReference type="Ensembl" id="ENST00000269919.11">
    <molecule id="Q9NXJ5-1"/>
    <property type="protein sequence ID" value="ENSP00000269919.3"/>
    <property type="gene ID" value="ENSG00000130517.14"/>
</dbReference>
<dbReference type="GeneID" id="54858"/>
<dbReference type="KEGG" id="hsa:54858"/>
<dbReference type="MANE-Select" id="ENST00000269919.11">
    <property type="protein sequence ID" value="ENSP00000269919.3"/>
    <property type="RefSeq nucleotide sequence ID" value="NM_017712.4"/>
    <property type="RefSeq protein sequence ID" value="NP_060182.1"/>
</dbReference>
<dbReference type="UCSC" id="uc002nis.2">
    <molecule id="Q9NXJ5-1"/>
    <property type="organism name" value="human"/>
</dbReference>
<dbReference type="AGR" id="HGNC:13568"/>
<dbReference type="CTD" id="54858"/>
<dbReference type="DisGeNET" id="54858"/>
<dbReference type="GeneCards" id="PGPEP1"/>
<dbReference type="HGNC" id="HGNC:13568">
    <property type="gene designation" value="PGPEP1"/>
</dbReference>
<dbReference type="HPA" id="ENSG00000130517">
    <property type="expression patterns" value="Low tissue specificity"/>
</dbReference>
<dbReference type="MIM" id="610694">
    <property type="type" value="gene"/>
</dbReference>
<dbReference type="neXtProt" id="NX_Q9NXJ5"/>
<dbReference type="OpenTargets" id="ENSG00000130517"/>
<dbReference type="PharmGKB" id="PA33247"/>
<dbReference type="VEuPathDB" id="HostDB:ENSG00000130517"/>
<dbReference type="eggNOG" id="KOG4755">
    <property type="taxonomic scope" value="Eukaryota"/>
</dbReference>
<dbReference type="GeneTree" id="ENSGT00390000015368"/>
<dbReference type="HOGENOM" id="CLU_043960_3_0_1"/>
<dbReference type="InParanoid" id="Q9NXJ5"/>
<dbReference type="OMA" id="KLAYNHK"/>
<dbReference type="OrthoDB" id="407146at2759"/>
<dbReference type="PAN-GO" id="Q9NXJ5">
    <property type="GO annotations" value="1 GO annotation based on evolutionary models"/>
</dbReference>
<dbReference type="PhylomeDB" id="Q9NXJ5"/>
<dbReference type="TreeFam" id="TF313278"/>
<dbReference type="BioCyc" id="MetaCyc:HS05394-MONOMER"/>
<dbReference type="BRENDA" id="3.4.19.3">
    <property type="organism ID" value="2681"/>
</dbReference>
<dbReference type="PathwayCommons" id="Q9NXJ5"/>
<dbReference type="SignaLink" id="Q9NXJ5"/>
<dbReference type="BioGRID-ORCS" id="54858">
    <property type="hits" value="100 hits in 1156 CRISPR screens"/>
</dbReference>
<dbReference type="ChiTaRS" id="PGPEP1">
    <property type="organism name" value="human"/>
</dbReference>
<dbReference type="GeneWiki" id="PGPEP1"/>
<dbReference type="GenomeRNAi" id="54858"/>
<dbReference type="Pharos" id="Q9NXJ5">
    <property type="development level" value="Tbio"/>
</dbReference>
<dbReference type="PRO" id="PR:Q9NXJ5"/>
<dbReference type="Proteomes" id="UP000005640">
    <property type="component" value="Chromosome 19"/>
</dbReference>
<dbReference type="RNAct" id="Q9NXJ5">
    <property type="molecule type" value="protein"/>
</dbReference>
<dbReference type="Bgee" id="ENSG00000130517">
    <property type="expression patterns" value="Expressed in cardia of stomach and 183 other cell types or tissues"/>
</dbReference>
<dbReference type="ExpressionAtlas" id="Q9NXJ5">
    <property type="expression patterns" value="baseline and differential"/>
</dbReference>
<dbReference type="GO" id="GO:0005829">
    <property type="term" value="C:cytosol"/>
    <property type="evidence" value="ECO:0007669"/>
    <property type="project" value="InterPro"/>
</dbReference>
<dbReference type="GO" id="GO:0016920">
    <property type="term" value="F:pyroglutamyl-peptidase activity"/>
    <property type="evidence" value="ECO:0007669"/>
    <property type="project" value="UniProtKB-EC"/>
</dbReference>
<dbReference type="GO" id="GO:0030163">
    <property type="term" value="P:protein catabolic process"/>
    <property type="evidence" value="ECO:0007669"/>
    <property type="project" value="Ensembl"/>
</dbReference>
<dbReference type="GO" id="GO:0006508">
    <property type="term" value="P:proteolysis"/>
    <property type="evidence" value="ECO:0007669"/>
    <property type="project" value="UniProtKB-KW"/>
</dbReference>
<dbReference type="CDD" id="cd00501">
    <property type="entry name" value="Peptidase_C15"/>
    <property type="match status" value="1"/>
</dbReference>
<dbReference type="FunFam" id="3.40.630.20:FF:000002">
    <property type="entry name" value="Pyroglutamyl-peptidase 1"/>
    <property type="match status" value="1"/>
</dbReference>
<dbReference type="Gene3D" id="3.40.630.20">
    <property type="entry name" value="Peptidase C15, pyroglutamyl peptidase I-like"/>
    <property type="match status" value="1"/>
</dbReference>
<dbReference type="InterPro" id="IPR000816">
    <property type="entry name" value="Peptidase_C15"/>
</dbReference>
<dbReference type="InterPro" id="IPR016125">
    <property type="entry name" value="Peptidase_C15-like"/>
</dbReference>
<dbReference type="InterPro" id="IPR036440">
    <property type="entry name" value="Peptidase_C15-like_sf"/>
</dbReference>
<dbReference type="InterPro" id="IPR033694">
    <property type="entry name" value="PGPEP1_Cys_AS"/>
</dbReference>
<dbReference type="InterPro" id="IPR033693">
    <property type="entry name" value="PGPEP1_Glu_AS"/>
</dbReference>
<dbReference type="PANTHER" id="PTHR23402">
    <property type="entry name" value="PROTEASE FAMILY C15 PYROGLUTAMYL-PEPTIDASE I-RELATED"/>
    <property type="match status" value="1"/>
</dbReference>
<dbReference type="PANTHER" id="PTHR23402:SF16">
    <property type="entry name" value="PYROGLUTAMYL-PEPTIDASE 1"/>
    <property type="match status" value="1"/>
</dbReference>
<dbReference type="Pfam" id="PF01470">
    <property type="entry name" value="Peptidase_C15"/>
    <property type="match status" value="1"/>
</dbReference>
<dbReference type="PIRSF" id="PIRSF015592">
    <property type="entry name" value="Prld-crbxl_pptds"/>
    <property type="match status" value="1"/>
</dbReference>
<dbReference type="PRINTS" id="PR00706">
    <property type="entry name" value="PYROGLUPTASE"/>
</dbReference>
<dbReference type="SUPFAM" id="SSF53182">
    <property type="entry name" value="Pyrrolidone carboxyl peptidase (pyroglutamate aminopeptidase)"/>
    <property type="match status" value="1"/>
</dbReference>
<dbReference type="PROSITE" id="PS01334">
    <property type="entry name" value="PYRASE_CYS"/>
    <property type="match status" value="1"/>
</dbReference>
<dbReference type="PROSITE" id="PS01333">
    <property type="entry name" value="PYRASE_GLU"/>
    <property type="match status" value="1"/>
</dbReference>
<comment type="function">
    <text evidence="4">Removes 5-oxoproline from various penultimate amino acid residues except L-proline.</text>
</comment>
<comment type="catalytic activity">
    <reaction evidence="2 3 4">
        <text>Release of an N-terminal pyroglutamyl group from a polypeptide, the second amino acid generally not being Pro.</text>
        <dbReference type="EC" id="3.4.19.3"/>
    </reaction>
</comment>
<comment type="activity regulation">
    <text evidence="4">Inhibited by transition metal ions including Ni(2+), Zn(2+), and Cu(2+) and by sulfhydryl-blocking agents.</text>
</comment>
<comment type="subunit">
    <text evidence="4">Monomer.</text>
</comment>
<comment type="interaction">
    <interactant intactId="EBI-12813581">
        <id>Q9NXJ5-2</id>
    </interactant>
    <interactant intactId="EBI-745213">
        <id>P29972</id>
        <label>AQP1</label>
    </interactant>
    <organismsDiffer>false</organismsDiffer>
    <experiments>3</experiments>
</comment>
<comment type="interaction">
    <interactant intactId="EBI-12813581">
        <id>Q9NXJ5-2</id>
    </interactant>
    <interactant intactId="EBI-741158">
        <id>Q96HA8</id>
        <label>NTAQ1</label>
    </interactant>
    <organismsDiffer>false</organismsDiffer>
    <experiments>3</experiments>
</comment>
<comment type="interaction">
    <interactant intactId="EBI-12813581">
        <id>Q9NXJ5-2</id>
    </interactant>
    <interactant intactId="EBI-2129763">
        <id>Q96LR5</id>
        <label>UBE2E2</label>
    </interactant>
    <organismsDiffer>false</organismsDiffer>
    <experiments>6</experiments>
</comment>
<comment type="interaction">
    <interactant intactId="EBI-12813581">
        <id>Q9NXJ5-2</id>
    </interactant>
    <interactant intactId="EBI-348496">
        <id>Q969T4</id>
        <label>UBE2E3</label>
    </interactant>
    <organismsDiffer>false</organismsDiffer>
    <experiments>5</experiments>
</comment>
<comment type="subcellular location">
    <subcellularLocation>
        <location evidence="1">Cytoplasm</location>
    </subcellularLocation>
</comment>
<comment type="alternative products">
    <event type="alternative splicing"/>
    <isoform>
        <id>Q9NXJ5-1</id>
        <name>1</name>
        <sequence type="displayed"/>
    </isoform>
    <isoform>
        <id>Q9NXJ5-2</id>
        <name>2</name>
        <sequence type="described" ref="VSP_056472"/>
    </isoform>
</comment>
<comment type="similarity">
    <text evidence="7">Belongs to the peptidase C15 family.</text>
</comment>